<keyword id="KW-0249">Electron transport</keyword>
<keyword id="KW-0472">Membrane</keyword>
<keyword id="KW-0496">Mitochondrion</keyword>
<keyword id="KW-0999">Mitochondrion inner membrane</keyword>
<keyword id="KW-0520">NAD</keyword>
<keyword id="KW-0679">Respiratory chain</keyword>
<keyword id="KW-1278">Translocase</keyword>
<keyword id="KW-0812">Transmembrane</keyword>
<keyword id="KW-1133">Transmembrane helix</keyword>
<keyword id="KW-0813">Transport</keyword>
<keyword id="KW-0830">Ubiquinone</keyword>
<gene>
    <name type="primary">MT-ND4</name>
    <name type="synonym">MTND4</name>
    <name type="synonym">NADH4</name>
    <name type="synonym">ND4</name>
</gene>
<proteinExistence type="inferred from homology"/>
<evidence type="ECO:0000250" key="1">
    <source>
        <dbReference type="UniProtKB" id="P03905"/>
    </source>
</evidence>
<evidence type="ECO:0000250" key="2">
    <source>
        <dbReference type="UniProtKB" id="P03910"/>
    </source>
</evidence>
<evidence type="ECO:0000255" key="3"/>
<evidence type="ECO:0000305" key="4"/>
<dbReference type="EC" id="7.1.1.2" evidence="1"/>
<dbReference type="EMBL" id="X99256">
    <property type="protein sequence ID" value="CAA67637.1"/>
    <property type="molecule type" value="Genomic_DNA"/>
</dbReference>
<dbReference type="EMBL" id="V00659">
    <property type="protein sequence ID" value="CAB51360.1"/>
    <property type="molecule type" value="Genomic_DNA"/>
</dbReference>
<dbReference type="PIR" id="T11842">
    <property type="entry name" value="QXGI4M"/>
</dbReference>
<dbReference type="RefSeq" id="NP_007831.1">
    <property type="nucleotide sequence ID" value="NC_002082.1"/>
</dbReference>
<dbReference type="SMR" id="P03909"/>
<dbReference type="GeneID" id="808471"/>
<dbReference type="CTD" id="4538"/>
<dbReference type="GO" id="GO:0005743">
    <property type="term" value="C:mitochondrial inner membrane"/>
    <property type="evidence" value="ECO:0000250"/>
    <property type="project" value="UniProtKB"/>
</dbReference>
<dbReference type="GO" id="GO:0008137">
    <property type="term" value="F:NADH dehydrogenase (ubiquinone) activity"/>
    <property type="evidence" value="ECO:0000250"/>
    <property type="project" value="UniProtKB"/>
</dbReference>
<dbReference type="GO" id="GO:0048039">
    <property type="term" value="F:ubiquinone binding"/>
    <property type="evidence" value="ECO:0007669"/>
    <property type="project" value="TreeGrafter"/>
</dbReference>
<dbReference type="GO" id="GO:0015990">
    <property type="term" value="P:electron transport coupled proton transport"/>
    <property type="evidence" value="ECO:0007669"/>
    <property type="project" value="TreeGrafter"/>
</dbReference>
<dbReference type="GO" id="GO:0006120">
    <property type="term" value="P:mitochondrial electron transport, NADH to ubiquinone"/>
    <property type="evidence" value="ECO:0000250"/>
    <property type="project" value="UniProtKB"/>
</dbReference>
<dbReference type="GO" id="GO:0032981">
    <property type="term" value="P:mitochondrial respiratory chain complex I assembly"/>
    <property type="evidence" value="ECO:0000250"/>
    <property type="project" value="UniProtKB"/>
</dbReference>
<dbReference type="InterPro" id="IPR000260">
    <property type="entry name" value="NADH4_N"/>
</dbReference>
<dbReference type="InterPro" id="IPR010227">
    <property type="entry name" value="NADH_Q_OxRdtase_chainM/4"/>
</dbReference>
<dbReference type="InterPro" id="IPR003918">
    <property type="entry name" value="NADH_UbQ_OxRdtase"/>
</dbReference>
<dbReference type="InterPro" id="IPR001750">
    <property type="entry name" value="ND/Mrp_TM"/>
</dbReference>
<dbReference type="NCBIfam" id="TIGR01972">
    <property type="entry name" value="NDH_I_M"/>
    <property type="match status" value="1"/>
</dbReference>
<dbReference type="PANTHER" id="PTHR43507">
    <property type="entry name" value="NADH-UBIQUINONE OXIDOREDUCTASE CHAIN 4"/>
    <property type="match status" value="1"/>
</dbReference>
<dbReference type="PANTHER" id="PTHR43507:SF20">
    <property type="entry name" value="NADH-UBIQUINONE OXIDOREDUCTASE CHAIN 4"/>
    <property type="match status" value="1"/>
</dbReference>
<dbReference type="Pfam" id="PF01059">
    <property type="entry name" value="Oxidored_q5_N"/>
    <property type="match status" value="1"/>
</dbReference>
<dbReference type="Pfam" id="PF00361">
    <property type="entry name" value="Proton_antipo_M"/>
    <property type="match status" value="1"/>
</dbReference>
<dbReference type="PRINTS" id="PR01437">
    <property type="entry name" value="NUOXDRDTASE4"/>
</dbReference>
<reference key="1">
    <citation type="journal article" date="1996" name="Hereditas">
        <title>A complete mitochondrial DNA molecule of the white-handed gibbon, Hylobates lar, and comparison among individual mitochondrial genes of all hominoid genera.</title>
        <authorList>
            <person name="Arnason U."/>
            <person name="Gullberg A."/>
            <person name="Xu X."/>
        </authorList>
    </citation>
    <scope>NUCLEOTIDE SEQUENCE [GENOMIC DNA]</scope>
    <source>
        <strain>Isolate Ester</strain>
    </source>
</reference>
<reference key="2">
    <citation type="journal article" date="1982" name="J. Mol. Evol.">
        <title>Mitochondrial DNA sequences of primates: tempo and mode of evolution.</title>
        <authorList>
            <person name="Brown W.M."/>
            <person name="Prager E.M."/>
            <person name="Wang A."/>
            <person name="Wilson A.C."/>
        </authorList>
    </citation>
    <scope>NUCLEOTIDE SEQUENCE [GENOMIC DNA] OF 308-459</scope>
</reference>
<name>NU4M_HYLLA</name>
<accession>P03909</accession>
<feature type="chain" id="PRO_0000117943" description="NADH-ubiquinone oxidoreductase chain 4">
    <location>
        <begin position="1"/>
        <end position="459"/>
    </location>
</feature>
<feature type="transmembrane region" description="Helical" evidence="3">
    <location>
        <begin position="22"/>
        <end position="42"/>
    </location>
</feature>
<feature type="transmembrane region" description="Helical" evidence="3">
    <location>
        <begin position="60"/>
        <end position="80"/>
    </location>
</feature>
<feature type="transmembrane region" description="Helical" evidence="3">
    <location>
        <begin position="98"/>
        <end position="118"/>
    </location>
</feature>
<feature type="transmembrane region" description="Helical" evidence="3">
    <location>
        <begin position="145"/>
        <end position="165"/>
    </location>
</feature>
<feature type="transmembrane region" description="Helical" evidence="3">
    <location>
        <begin position="196"/>
        <end position="216"/>
    </location>
</feature>
<feature type="transmembrane region" description="Helical" evidence="3">
    <location>
        <begin position="224"/>
        <end position="244"/>
    </location>
</feature>
<feature type="transmembrane region" description="Helical" evidence="3">
    <location>
        <begin position="257"/>
        <end position="277"/>
    </location>
</feature>
<feature type="transmembrane region" description="Helical" evidence="3">
    <location>
        <begin position="284"/>
        <end position="303"/>
    </location>
</feature>
<feature type="transmembrane region" description="Helical" evidence="3">
    <location>
        <begin position="307"/>
        <end position="329"/>
    </location>
</feature>
<feature type="transmembrane region" description="Helical" evidence="3">
    <location>
        <begin position="350"/>
        <end position="370"/>
    </location>
</feature>
<feature type="transmembrane region" description="Helical" evidence="3">
    <location>
        <begin position="393"/>
        <end position="413"/>
    </location>
</feature>
<feature type="transmembrane region" description="Helical" evidence="3">
    <location>
        <begin position="435"/>
        <end position="455"/>
    </location>
</feature>
<protein>
    <recommendedName>
        <fullName>NADH-ubiquinone oxidoreductase chain 4</fullName>
        <ecNumber evidence="1">7.1.1.2</ecNumber>
    </recommendedName>
    <alternativeName>
        <fullName>NADH dehydrogenase subunit 4</fullName>
    </alternativeName>
</protein>
<comment type="function">
    <text evidence="1">Core subunit of the mitochondrial membrane respiratory chain NADH dehydrogenase (Complex I) which catalyzes electron transfer from NADH through the respiratory chain, using ubiquinone as an electron acceptor. Essential for the catalytic activity and assembly of complex I.</text>
</comment>
<comment type="catalytic activity">
    <reaction evidence="1">
        <text>a ubiquinone + NADH + 5 H(+)(in) = a ubiquinol + NAD(+) + 4 H(+)(out)</text>
        <dbReference type="Rhea" id="RHEA:29091"/>
        <dbReference type="Rhea" id="RHEA-COMP:9565"/>
        <dbReference type="Rhea" id="RHEA-COMP:9566"/>
        <dbReference type="ChEBI" id="CHEBI:15378"/>
        <dbReference type="ChEBI" id="CHEBI:16389"/>
        <dbReference type="ChEBI" id="CHEBI:17976"/>
        <dbReference type="ChEBI" id="CHEBI:57540"/>
        <dbReference type="ChEBI" id="CHEBI:57945"/>
        <dbReference type="EC" id="7.1.1.2"/>
    </reaction>
</comment>
<comment type="subunit">
    <text evidence="2">Core subunit of respiratory chain NADH dehydrogenase (Complex I) which is composed of 45 different subunits.</text>
</comment>
<comment type="subcellular location">
    <subcellularLocation>
        <location evidence="2">Mitochondrion inner membrane</location>
        <topology evidence="3">Multi-pass membrane protein</topology>
    </subcellularLocation>
</comment>
<comment type="similarity">
    <text evidence="4">Belongs to the complex I subunit 4 family.</text>
</comment>
<geneLocation type="mitochondrion"/>
<organism>
    <name type="scientific">Hylobates lar</name>
    <name type="common">Lar gibbon</name>
    <name type="synonym">White-handed gibbon</name>
    <dbReference type="NCBI Taxonomy" id="9580"/>
    <lineage>
        <taxon>Eukaryota</taxon>
        <taxon>Metazoa</taxon>
        <taxon>Chordata</taxon>
        <taxon>Craniata</taxon>
        <taxon>Vertebrata</taxon>
        <taxon>Euteleostomi</taxon>
        <taxon>Mammalia</taxon>
        <taxon>Eutheria</taxon>
        <taxon>Euarchontoglires</taxon>
        <taxon>Primates</taxon>
        <taxon>Haplorrhini</taxon>
        <taxon>Catarrhini</taxon>
        <taxon>Hylobatidae</taxon>
        <taxon>Hylobates</taxon>
    </lineage>
</organism>
<sequence length="459" mass="51723">MLKLIIPTTMLLPLTWLSKKHMIWINTTTHSLIISPIPLLFFNQANNNLFTYSLSFSSDPLTTPLLMLTTWLLPLMIMASQHHLSNEPPLRKKLYLSMLIILQVSLIMTFTATELMMFYVLFETTLIPTLVIITRWGNQPERLNAGSYFLFYTLVGSLPLLIALIHTHNTLGSLNIMLLTLSSQNLTDSWSNNLMWLAYMMAFMVKMPLYGLHLWLPKAHVEAPIAGSMVLAAVLLKLGGYGMMRLTLILSPLTKHMAYPFLMLSLWGMIMTSSICLRQTDLKSLIAYSSVSHMALVITAILIQTPWSFTGATVLMIAHGLTSSLLFCLANSNYERTHSRIMILSRGLQALLPLMAFWWLAASLANLALPPTINLLGELFVLMASFSWANTTITLTGLNVLITALYSLYMFIMTQRGTLTHHIKNMKPSLTRENMLMLMHLFPLLLLTLNPNIITGFTP</sequence>